<dbReference type="EMBL" id="AF069736">
    <property type="protein sequence ID" value="AAC39906.1"/>
    <property type="molecule type" value="mRNA"/>
</dbReference>
<dbReference type="EMBL" id="AL121990">
    <property type="status" value="NOT_ANNOTATED_CDS"/>
    <property type="molecule type" value="Genomic_DNA"/>
</dbReference>
<dbReference type="EMBL" id="CH471098">
    <property type="protein sequence ID" value="EAW69902.1"/>
    <property type="molecule type" value="Genomic_DNA"/>
</dbReference>
<dbReference type="EMBL" id="CH471098">
    <property type="protein sequence ID" value="EAW69903.1"/>
    <property type="molecule type" value="Genomic_DNA"/>
</dbReference>
<dbReference type="EMBL" id="BC041094">
    <property type="protein sequence ID" value="AAH41094.1"/>
    <property type="molecule type" value="mRNA"/>
</dbReference>
<dbReference type="EMBL" id="AJ009770">
    <property type="protein sequence ID" value="CAA08816.1"/>
    <property type="molecule type" value="mRNA"/>
</dbReference>
<dbReference type="CCDS" id="CCDS1581.1">
    <molecule id="O75529-1"/>
</dbReference>
<dbReference type="CCDS" id="CCDS31051.1">
    <molecule id="O75529-2"/>
</dbReference>
<dbReference type="RefSeq" id="NP_001020418.1">
    <molecule id="O75529-2"/>
    <property type="nucleotide sequence ID" value="NM_001025247.2"/>
</dbReference>
<dbReference type="RefSeq" id="NP_055224.1">
    <molecule id="O75529-1"/>
    <property type="nucleotide sequence ID" value="NM_014409.4"/>
</dbReference>
<dbReference type="RefSeq" id="XP_005273156.1">
    <molecule id="O75529-1"/>
    <property type="nucleotide sequence ID" value="XM_005273099.5"/>
</dbReference>
<dbReference type="RefSeq" id="XP_054191980.1">
    <molecule id="O75529-1"/>
    <property type="nucleotide sequence ID" value="XM_054336005.1"/>
</dbReference>
<dbReference type="PDB" id="7KTR">
    <property type="method" value="EM"/>
    <property type="resolution" value="2.93 A"/>
    <property type="chains" value="B=1-589"/>
</dbReference>
<dbReference type="PDB" id="7KTS">
    <property type="method" value="EM"/>
    <property type="resolution" value="19.09 A"/>
    <property type="chains" value="B=1-589"/>
</dbReference>
<dbReference type="PDB" id="8H7G">
    <property type="method" value="EM"/>
    <property type="resolution" value="3.70 A"/>
    <property type="chains" value="H=1-589"/>
</dbReference>
<dbReference type="PDBsum" id="7KTR"/>
<dbReference type="PDBsum" id="7KTS"/>
<dbReference type="PDBsum" id="8H7G"/>
<dbReference type="EMDB" id="EMD-23027"/>
<dbReference type="EMDB" id="EMD-23028"/>
<dbReference type="EMDB" id="EMD-34520"/>
<dbReference type="SMR" id="O75529"/>
<dbReference type="BioGRID" id="117998">
    <property type="interactions" value="105"/>
</dbReference>
<dbReference type="ComplexPortal" id="CPX-6802">
    <property type="entry name" value="SAGA complex, KAT2B variant"/>
</dbReference>
<dbReference type="ComplexPortal" id="CPX-900">
    <property type="entry name" value="SAGA complex, KAT2A variant"/>
</dbReference>
<dbReference type="ComplexPortal" id="CPX-903">
    <property type="entry name" value="TFTC histone acetylation complex"/>
</dbReference>
<dbReference type="ComplexPortal" id="CPX-989">
    <property type="entry name" value="PCAF histone acetylase complex"/>
</dbReference>
<dbReference type="CORUM" id="O75529"/>
<dbReference type="DIP" id="DIP-28147N"/>
<dbReference type="FunCoup" id="O75529">
    <property type="interactions" value="1903"/>
</dbReference>
<dbReference type="IntAct" id="O75529">
    <property type="interactions" value="70"/>
</dbReference>
<dbReference type="MINT" id="O75529"/>
<dbReference type="STRING" id="9606.ENSP00000258281"/>
<dbReference type="GlyGen" id="O75529">
    <property type="glycosylation" value="3 sites, 2 N-linked glycans (2 sites), 1 O-linked glycan (1 site)"/>
</dbReference>
<dbReference type="iPTMnet" id="O75529"/>
<dbReference type="PhosphoSitePlus" id="O75529"/>
<dbReference type="BioMuta" id="TAF5L"/>
<dbReference type="jPOST" id="O75529"/>
<dbReference type="MassIVE" id="O75529"/>
<dbReference type="PaxDb" id="9606-ENSP00000258281"/>
<dbReference type="PeptideAtlas" id="O75529"/>
<dbReference type="ProteomicsDB" id="50066">
    <molecule id="O75529-1"/>
</dbReference>
<dbReference type="ProteomicsDB" id="50067">
    <molecule id="O75529-2"/>
</dbReference>
<dbReference type="Pumba" id="O75529"/>
<dbReference type="Antibodypedia" id="20789">
    <property type="antibodies" value="218 antibodies from 30 providers"/>
</dbReference>
<dbReference type="DNASU" id="27097"/>
<dbReference type="Ensembl" id="ENST00000258281.7">
    <molecule id="O75529-1"/>
    <property type="protein sequence ID" value="ENSP00000258281.2"/>
    <property type="gene ID" value="ENSG00000135801.11"/>
</dbReference>
<dbReference type="Ensembl" id="ENST00000366675.3">
    <molecule id="O75529-2"/>
    <property type="protein sequence ID" value="ENSP00000355635.3"/>
    <property type="gene ID" value="ENSG00000135801.11"/>
</dbReference>
<dbReference type="GeneID" id="27097"/>
<dbReference type="KEGG" id="hsa:27097"/>
<dbReference type="MANE-Select" id="ENST00000258281.7">
    <property type="protein sequence ID" value="ENSP00000258281.2"/>
    <property type="RefSeq nucleotide sequence ID" value="NM_014409.4"/>
    <property type="RefSeq protein sequence ID" value="NP_055224.1"/>
</dbReference>
<dbReference type="UCSC" id="uc001htq.5">
    <molecule id="O75529-1"/>
    <property type="organism name" value="human"/>
</dbReference>
<dbReference type="AGR" id="HGNC:17304"/>
<dbReference type="CTD" id="27097"/>
<dbReference type="DisGeNET" id="27097"/>
<dbReference type="GeneCards" id="TAF5L"/>
<dbReference type="HGNC" id="HGNC:17304">
    <property type="gene designation" value="TAF5L"/>
</dbReference>
<dbReference type="HPA" id="ENSG00000135801">
    <property type="expression patterns" value="Low tissue specificity"/>
</dbReference>
<dbReference type="neXtProt" id="NX_O75529"/>
<dbReference type="OpenTargets" id="ENSG00000135801"/>
<dbReference type="PharmGKB" id="PA38223"/>
<dbReference type="VEuPathDB" id="HostDB:ENSG00000135801"/>
<dbReference type="eggNOG" id="KOG0263">
    <property type="taxonomic scope" value="Eukaryota"/>
</dbReference>
<dbReference type="GeneTree" id="ENSGT00940000153342"/>
<dbReference type="HOGENOM" id="CLU_005884_3_0_1"/>
<dbReference type="InParanoid" id="O75529"/>
<dbReference type="OMA" id="HLDMVHC"/>
<dbReference type="OrthoDB" id="10266330at2759"/>
<dbReference type="PAN-GO" id="O75529">
    <property type="GO annotations" value="4 GO annotations based on evolutionary models"/>
</dbReference>
<dbReference type="PhylomeDB" id="O75529"/>
<dbReference type="TreeFam" id="TF300669"/>
<dbReference type="PathwayCommons" id="O75529"/>
<dbReference type="Reactome" id="R-HSA-3214847">
    <property type="pathway name" value="HATs acetylate histones"/>
</dbReference>
<dbReference type="SignaLink" id="O75529"/>
<dbReference type="SIGNOR" id="O75529"/>
<dbReference type="BioGRID-ORCS" id="27097">
    <property type="hits" value="184 hits in 1182 CRISPR screens"/>
</dbReference>
<dbReference type="ChiTaRS" id="TAF5L">
    <property type="organism name" value="human"/>
</dbReference>
<dbReference type="GeneWiki" id="TAF5L"/>
<dbReference type="GenomeRNAi" id="27097"/>
<dbReference type="Pharos" id="O75529">
    <property type="development level" value="Tbio"/>
</dbReference>
<dbReference type="PRO" id="PR:O75529"/>
<dbReference type="Proteomes" id="UP000005640">
    <property type="component" value="Chromosome 1"/>
</dbReference>
<dbReference type="RNAct" id="O75529">
    <property type="molecule type" value="protein"/>
</dbReference>
<dbReference type="Bgee" id="ENSG00000135801">
    <property type="expression patterns" value="Expressed in buccal mucosa cell and 169 other cell types or tissues"/>
</dbReference>
<dbReference type="ExpressionAtlas" id="O75529">
    <property type="expression patterns" value="baseline and differential"/>
</dbReference>
<dbReference type="GO" id="GO:0036464">
    <property type="term" value="C:cytoplasmic ribonucleoprotein granule"/>
    <property type="evidence" value="ECO:0000314"/>
    <property type="project" value="HPA"/>
</dbReference>
<dbReference type="GO" id="GO:0016607">
    <property type="term" value="C:nuclear speck"/>
    <property type="evidence" value="ECO:0000314"/>
    <property type="project" value="HPA"/>
</dbReference>
<dbReference type="GO" id="GO:0005634">
    <property type="term" value="C:nucleus"/>
    <property type="evidence" value="ECO:0000314"/>
    <property type="project" value="UniProtKB"/>
</dbReference>
<dbReference type="GO" id="GO:0000124">
    <property type="term" value="C:SAGA complex"/>
    <property type="evidence" value="ECO:0000314"/>
    <property type="project" value="UniProtKB"/>
</dbReference>
<dbReference type="GO" id="GO:0033276">
    <property type="term" value="C:transcription factor TFTC complex"/>
    <property type="evidence" value="ECO:0000314"/>
    <property type="project" value="UniProtKB"/>
</dbReference>
<dbReference type="GO" id="GO:0003713">
    <property type="term" value="F:transcription coactivator activity"/>
    <property type="evidence" value="ECO:0000314"/>
    <property type="project" value="UniProtKB"/>
</dbReference>
<dbReference type="GO" id="GO:0045893">
    <property type="term" value="P:positive regulation of DNA-templated transcription"/>
    <property type="evidence" value="ECO:0000303"/>
    <property type="project" value="ComplexPortal"/>
</dbReference>
<dbReference type="GO" id="GO:0006282">
    <property type="term" value="P:regulation of DNA repair"/>
    <property type="evidence" value="ECO:0000303"/>
    <property type="project" value="ComplexPortal"/>
</dbReference>
<dbReference type="GO" id="GO:0006355">
    <property type="term" value="P:regulation of DNA-templated transcription"/>
    <property type="evidence" value="ECO:0000250"/>
    <property type="project" value="UniProtKB"/>
</dbReference>
<dbReference type="GO" id="GO:0043484">
    <property type="term" value="P:regulation of RNA splicing"/>
    <property type="evidence" value="ECO:0000303"/>
    <property type="project" value="ComplexPortal"/>
</dbReference>
<dbReference type="GO" id="GO:1904672">
    <property type="term" value="P:regulation of somatic stem cell population maintenance"/>
    <property type="evidence" value="ECO:0000250"/>
    <property type="project" value="UniProtKB"/>
</dbReference>
<dbReference type="GO" id="GO:0006357">
    <property type="term" value="P:regulation of transcription by RNA polymerase II"/>
    <property type="evidence" value="ECO:0000314"/>
    <property type="project" value="ComplexPortal"/>
</dbReference>
<dbReference type="GO" id="GO:0006366">
    <property type="term" value="P:transcription by RNA polymerase II"/>
    <property type="evidence" value="ECO:0000304"/>
    <property type="project" value="ProtInc"/>
</dbReference>
<dbReference type="CDD" id="cd08044">
    <property type="entry name" value="TAF5_NTD2"/>
    <property type="match status" value="1"/>
</dbReference>
<dbReference type="CDD" id="cd00200">
    <property type="entry name" value="WD40"/>
    <property type="match status" value="1"/>
</dbReference>
<dbReference type="FunFam" id="1.25.40.500:FF:000002">
    <property type="entry name" value="TAF5-like RNA polymerase II p300/CBP-associated factor-associated factor 65 kDa subunit 5L"/>
    <property type="match status" value="1"/>
</dbReference>
<dbReference type="FunFam" id="2.130.10.10:FF:000202">
    <property type="entry name" value="TAF5-like RNA polymerase II p300/CBP-associated factor-associated factor 65 kDa subunit 5L"/>
    <property type="match status" value="1"/>
</dbReference>
<dbReference type="FunFam" id="2.130.10.10:FF:000325">
    <property type="entry name" value="TAF5-like RNA polymerase II p300/CBP-associated factor-associated factor 65 kDa subunit 5L"/>
    <property type="match status" value="1"/>
</dbReference>
<dbReference type="Gene3D" id="1.25.40.500">
    <property type="entry name" value="TFIID subunit TAF5, NTD2 domain"/>
    <property type="match status" value="1"/>
</dbReference>
<dbReference type="Gene3D" id="2.130.10.10">
    <property type="entry name" value="YVTN repeat-like/Quinoprotein amine dehydrogenase"/>
    <property type="match status" value="3"/>
</dbReference>
<dbReference type="InterPro" id="IPR020472">
    <property type="entry name" value="G-protein_beta_WD-40_rep"/>
</dbReference>
<dbReference type="InterPro" id="IPR007582">
    <property type="entry name" value="TFIID_NTD2"/>
</dbReference>
<dbReference type="InterPro" id="IPR037264">
    <property type="entry name" value="TFIID_NTD2_sf"/>
</dbReference>
<dbReference type="InterPro" id="IPR015943">
    <property type="entry name" value="WD40/YVTN_repeat-like_dom_sf"/>
</dbReference>
<dbReference type="InterPro" id="IPR019775">
    <property type="entry name" value="WD40_repeat_CS"/>
</dbReference>
<dbReference type="InterPro" id="IPR036322">
    <property type="entry name" value="WD40_repeat_dom_sf"/>
</dbReference>
<dbReference type="InterPro" id="IPR001680">
    <property type="entry name" value="WD40_rpt"/>
</dbReference>
<dbReference type="PANTHER" id="PTHR19879:SF6">
    <property type="entry name" value="TAF5-LIKE RNA POLYMERASE II P300_CBP-ASSOCIATED FACTOR-ASSOCIATED FACTOR 65 KDA SUBUNIT 5L"/>
    <property type="match status" value="1"/>
</dbReference>
<dbReference type="PANTHER" id="PTHR19879">
    <property type="entry name" value="TRANSCRIPTION INITIATION FACTOR TFIID"/>
    <property type="match status" value="1"/>
</dbReference>
<dbReference type="Pfam" id="PF04494">
    <property type="entry name" value="TFIID_NTD2"/>
    <property type="match status" value="1"/>
</dbReference>
<dbReference type="Pfam" id="PF00400">
    <property type="entry name" value="WD40"/>
    <property type="match status" value="6"/>
</dbReference>
<dbReference type="PRINTS" id="PR00320">
    <property type="entry name" value="GPROTEINBRPT"/>
</dbReference>
<dbReference type="SMART" id="SM00320">
    <property type="entry name" value="WD40"/>
    <property type="match status" value="6"/>
</dbReference>
<dbReference type="SUPFAM" id="SSF160897">
    <property type="entry name" value="Taf5 N-terminal domain-like"/>
    <property type="match status" value="1"/>
</dbReference>
<dbReference type="SUPFAM" id="SSF50978">
    <property type="entry name" value="WD40 repeat-like"/>
    <property type="match status" value="1"/>
</dbReference>
<dbReference type="PROSITE" id="PS00678">
    <property type="entry name" value="WD_REPEATS_1"/>
    <property type="match status" value="2"/>
</dbReference>
<dbReference type="PROSITE" id="PS50082">
    <property type="entry name" value="WD_REPEATS_2"/>
    <property type="match status" value="6"/>
</dbReference>
<dbReference type="PROSITE" id="PS50294">
    <property type="entry name" value="WD_REPEATS_REGION"/>
    <property type="match status" value="2"/>
</dbReference>
<keyword id="KW-0002">3D-structure</keyword>
<keyword id="KW-0025">Alternative splicing</keyword>
<keyword id="KW-0903">Direct protein sequencing</keyword>
<keyword id="KW-0539">Nucleus</keyword>
<keyword id="KW-1267">Proteomics identification</keyword>
<keyword id="KW-1185">Reference proteome</keyword>
<keyword id="KW-0677">Repeat</keyword>
<keyword id="KW-0804">Transcription</keyword>
<keyword id="KW-0805">Transcription regulation</keyword>
<keyword id="KW-0853">WD repeat</keyword>
<organism>
    <name type="scientific">Homo sapiens</name>
    <name type="common">Human</name>
    <dbReference type="NCBI Taxonomy" id="9606"/>
    <lineage>
        <taxon>Eukaryota</taxon>
        <taxon>Metazoa</taxon>
        <taxon>Chordata</taxon>
        <taxon>Craniata</taxon>
        <taxon>Vertebrata</taxon>
        <taxon>Euteleostomi</taxon>
        <taxon>Mammalia</taxon>
        <taxon>Eutheria</taxon>
        <taxon>Euarchontoglires</taxon>
        <taxon>Primates</taxon>
        <taxon>Haplorrhini</taxon>
        <taxon>Catarrhini</taxon>
        <taxon>Hominidae</taxon>
        <taxon>Homo</taxon>
    </lineage>
</organism>
<gene>
    <name evidence="9" type="primary">TAF5L</name>
    <name type="synonym">PAF65B</name>
</gene>
<protein>
    <recommendedName>
        <fullName evidence="7">TAF5-like RNA polymerase II p300/CBP-associated factor-associated factor 65 kDa subunit 5L</fullName>
        <shortName evidence="7">TAF5L</shortName>
    </recommendedName>
    <alternativeName>
        <fullName>PCAF-associated factor 65 beta</fullName>
        <shortName>PAF65-beta</shortName>
    </alternativeName>
</protein>
<sequence length="589" mass="66155">MKRVRTEQIQMAVSCYLKRRQYVDSDGPLKQGLRLSQTAEEMAANLTVQSESGCANIVSAAPCQAEPQQYEVQFGRLRNFLTDSDSQHSHEVMPLLYPLFVYLHLNLVQNSPKSTVESFYSRFHGMFLQNASQKDVIEQLQTTQTIQDILSNFKLRAFLDNKYVVRLQEDSYNYLIRYLQSDNNTALCKVLTLHIHLDVQPAKRTDYQLYASGSSSRSENNGLEPPDMPSPILQNEAALEVLQESIKRVKDGPPSLTTICFYAFYNTEQLLNTAEISPDSKLLAAGFDNSCIKLWSLRSKKLKSEPHQVDVSRIHLACDILEEEDDEDDNAGTEMKILRGHCGPVYSTRFLADSSGLLSCSEDMSIRYWDLGSFTNTVLYQGHAYPVWDLDISPYSLYFASGSHDRTARLWSFDRTYPLRIYAGHLADVDCVKFHPNSNYLATGSTDKTVRLWSAQQGNSVRLFTGHRGPVLSLAFSPNGKYLASAGEDQRLKLWDLASGTLYKELRGHTDNITSLTFSPDSGLIASASMDNSVRVWDIRNTYCSAPADGSSSELVGVYTGQMSNVLSVQFMACNLLLVTGITQENQEH</sequence>
<evidence type="ECO:0000250" key="1">
    <source>
        <dbReference type="UniProtKB" id="Q91WQ5"/>
    </source>
</evidence>
<evidence type="ECO:0000256" key="2">
    <source>
        <dbReference type="SAM" id="MobiDB-lite"/>
    </source>
</evidence>
<evidence type="ECO:0000269" key="3">
    <source>
    </source>
</evidence>
<evidence type="ECO:0000269" key="4">
    <source>
    </source>
</evidence>
<evidence type="ECO:0000269" key="5">
    <source>
    </source>
</evidence>
<evidence type="ECO:0000303" key="6">
    <source>
    </source>
</evidence>
<evidence type="ECO:0000305" key="7"/>
<evidence type="ECO:0000305" key="8">
    <source>
    </source>
</evidence>
<evidence type="ECO:0000312" key="9">
    <source>
        <dbReference type="HGNC" id="HGNC:17304"/>
    </source>
</evidence>
<evidence type="ECO:0007829" key="10">
    <source>
        <dbReference type="PDB" id="7KTR"/>
    </source>
</evidence>
<comment type="function">
    <text evidence="1 8">Functions as a component of the PCAF complex. The PCAF complex is capable of efficiently acetylating histones in a nucleosomal context. The PCAF complex could be considered as the human version of the yeast SAGA complex (Probable). With TAF6L, acts as an epigenetic regulator essential for somatic reprogramming. Regulates target genes through H3K9ac deposition and MYC recruitment which trigger MYC regulatory network to orchestrate gene expression programs to control embryonic stem cell state (By similarity).</text>
</comment>
<comment type="subunit">
    <text evidence="3 4 5">The PCAF complex is composed of a number of TBP-associated factors (TAFS), such as TAF5, TAF5L, TAF6, TAF6L, TAF9, TAF10 and TAF12, PCAF, and also PCAF-associated factors (PAFs), such as TADA2L/ADA2, TADA3L/ADA3 and SPT3. Component of the STAGA transcription coactivator-HAT complex, at least composed of SUPT3H, GCN5L2, TAF5L, TAF6L, SUPT7L, TADA3L, TAD1L, TAF10, TAF12, TRRAP and TAF9.</text>
</comment>
<comment type="interaction">
    <interactant intactId="EBI-1785876">
        <id>O75529</id>
    </interactant>
    <interactant intactId="EBI-1644164">
        <id>O43524</id>
        <label>FOXO3</label>
    </interactant>
    <organismsDiffer>false</organismsDiffer>
    <experiments>2</experiments>
</comment>
<comment type="interaction">
    <interactant intactId="EBI-1785876">
        <id>O75529</id>
    </interactant>
    <interactant intactId="EBI-302558">
        <id>Q3ZCM7</id>
        <label>TUBB8</label>
    </interactant>
    <organismsDiffer>false</organismsDiffer>
    <experiments>3</experiments>
</comment>
<comment type="subcellular location">
    <subcellularLocation>
        <location evidence="3 5">Nucleus</location>
    </subcellularLocation>
</comment>
<comment type="alternative products">
    <event type="alternative splicing"/>
    <isoform>
        <id>O75529-1</id>
        <name>1</name>
        <sequence type="displayed"/>
    </isoform>
    <isoform>
        <id>O75529-2</id>
        <name>2</name>
        <sequence type="described" ref="VSP_010156 VSP_010157"/>
    </isoform>
</comment>
<comment type="miscellaneous">
    <molecule>Isoform 2</molecule>
    <text evidence="7">May be due to an intron retention.</text>
</comment>
<comment type="similarity">
    <text evidence="7">Belongs to the WD repeat TAF5 family.</text>
</comment>
<accession>O75529</accession>
<accession>Q5TDI5</accession>
<accession>Q5TDI6</accession>
<accession>Q8IW31</accession>
<name>TAF5L_HUMAN</name>
<reference key="1">
    <citation type="journal article" date="1998" name="Cell">
        <title>Histone-like TAFs within the PCAF histone acetylase complex.</title>
        <authorList>
            <person name="Ogryzko V.V."/>
            <person name="Kotani T."/>
            <person name="Zhang X."/>
            <person name="Schiltz R.L."/>
            <person name="Howard T."/>
            <person name="Yang X.-J."/>
            <person name="Howard B.H."/>
            <person name="Qin J."/>
            <person name="Nakatani Y."/>
        </authorList>
    </citation>
    <scope>NUCLEOTIDE SEQUENCE [MRNA] (ISOFORM 1)</scope>
    <scope>PROTEIN SEQUENCE OF 123-134 AND 167-177</scope>
    <scope>SUBUNIT</scope>
    <scope>SUBCELLULAR LOCATION</scope>
    <scope>IDENTIFICATION BY MASS SPECTROMETRY</scope>
</reference>
<reference key="2">
    <citation type="journal article" date="2006" name="Nature">
        <title>The DNA sequence and biological annotation of human chromosome 1.</title>
        <authorList>
            <person name="Gregory S.G."/>
            <person name="Barlow K.F."/>
            <person name="McLay K.E."/>
            <person name="Kaul R."/>
            <person name="Swarbreck D."/>
            <person name="Dunham A."/>
            <person name="Scott C.E."/>
            <person name="Howe K.L."/>
            <person name="Woodfine K."/>
            <person name="Spencer C.C.A."/>
            <person name="Jones M.C."/>
            <person name="Gillson C."/>
            <person name="Searle S."/>
            <person name="Zhou Y."/>
            <person name="Kokocinski F."/>
            <person name="McDonald L."/>
            <person name="Evans R."/>
            <person name="Phillips K."/>
            <person name="Atkinson A."/>
            <person name="Cooper R."/>
            <person name="Jones C."/>
            <person name="Hall R.E."/>
            <person name="Andrews T.D."/>
            <person name="Lloyd C."/>
            <person name="Ainscough R."/>
            <person name="Almeida J.P."/>
            <person name="Ambrose K.D."/>
            <person name="Anderson F."/>
            <person name="Andrew R.W."/>
            <person name="Ashwell R.I.S."/>
            <person name="Aubin K."/>
            <person name="Babbage A.K."/>
            <person name="Bagguley C.L."/>
            <person name="Bailey J."/>
            <person name="Beasley H."/>
            <person name="Bethel G."/>
            <person name="Bird C.P."/>
            <person name="Bray-Allen S."/>
            <person name="Brown J.Y."/>
            <person name="Brown A.J."/>
            <person name="Buckley D."/>
            <person name="Burton J."/>
            <person name="Bye J."/>
            <person name="Carder C."/>
            <person name="Chapman J.C."/>
            <person name="Clark S.Y."/>
            <person name="Clarke G."/>
            <person name="Clee C."/>
            <person name="Cobley V."/>
            <person name="Collier R.E."/>
            <person name="Corby N."/>
            <person name="Coville G.J."/>
            <person name="Davies J."/>
            <person name="Deadman R."/>
            <person name="Dunn M."/>
            <person name="Earthrowl M."/>
            <person name="Ellington A.G."/>
            <person name="Errington H."/>
            <person name="Frankish A."/>
            <person name="Frankland J."/>
            <person name="French L."/>
            <person name="Garner P."/>
            <person name="Garnett J."/>
            <person name="Gay L."/>
            <person name="Ghori M.R.J."/>
            <person name="Gibson R."/>
            <person name="Gilby L.M."/>
            <person name="Gillett W."/>
            <person name="Glithero R.J."/>
            <person name="Grafham D.V."/>
            <person name="Griffiths C."/>
            <person name="Griffiths-Jones S."/>
            <person name="Grocock R."/>
            <person name="Hammond S."/>
            <person name="Harrison E.S.I."/>
            <person name="Hart E."/>
            <person name="Haugen E."/>
            <person name="Heath P.D."/>
            <person name="Holmes S."/>
            <person name="Holt K."/>
            <person name="Howden P.J."/>
            <person name="Hunt A.R."/>
            <person name="Hunt S.E."/>
            <person name="Hunter G."/>
            <person name="Isherwood J."/>
            <person name="James R."/>
            <person name="Johnson C."/>
            <person name="Johnson D."/>
            <person name="Joy A."/>
            <person name="Kay M."/>
            <person name="Kershaw J.K."/>
            <person name="Kibukawa M."/>
            <person name="Kimberley A.M."/>
            <person name="King A."/>
            <person name="Knights A.J."/>
            <person name="Lad H."/>
            <person name="Laird G."/>
            <person name="Lawlor S."/>
            <person name="Leongamornlert D.A."/>
            <person name="Lloyd D.M."/>
            <person name="Loveland J."/>
            <person name="Lovell J."/>
            <person name="Lush M.J."/>
            <person name="Lyne R."/>
            <person name="Martin S."/>
            <person name="Mashreghi-Mohammadi M."/>
            <person name="Matthews L."/>
            <person name="Matthews N.S.W."/>
            <person name="McLaren S."/>
            <person name="Milne S."/>
            <person name="Mistry S."/>
            <person name="Moore M.J.F."/>
            <person name="Nickerson T."/>
            <person name="O'Dell C.N."/>
            <person name="Oliver K."/>
            <person name="Palmeiri A."/>
            <person name="Palmer S.A."/>
            <person name="Parker A."/>
            <person name="Patel D."/>
            <person name="Pearce A.V."/>
            <person name="Peck A.I."/>
            <person name="Pelan S."/>
            <person name="Phelps K."/>
            <person name="Phillimore B.J."/>
            <person name="Plumb R."/>
            <person name="Rajan J."/>
            <person name="Raymond C."/>
            <person name="Rouse G."/>
            <person name="Saenphimmachak C."/>
            <person name="Sehra H.K."/>
            <person name="Sheridan E."/>
            <person name="Shownkeen R."/>
            <person name="Sims S."/>
            <person name="Skuce C.D."/>
            <person name="Smith M."/>
            <person name="Steward C."/>
            <person name="Subramanian S."/>
            <person name="Sycamore N."/>
            <person name="Tracey A."/>
            <person name="Tromans A."/>
            <person name="Van Helmond Z."/>
            <person name="Wall M."/>
            <person name="Wallis J.M."/>
            <person name="White S."/>
            <person name="Whitehead S.L."/>
            <person name="Wilkinson J.E."/>
            <person name="Willey D.L."/>
            <person name="Williams H."/>
            <person name="Wilming L."/>
            <person name="Wray P.W."/>
            <person name="Wu Z."/>
            <person name="Coulson A."/>
            <person name="Vaudin M."/>
            <person name="Sulston J.E."/>
            <person name="Durbin R.M."/>
            <person name="Hubbard T."/>
            <person name="Wooster R."/>
            <person name="Dunham I."/>
            <person name="Carter N.P."/>
            <person name="McVean G."/>
            <person name="Ross M.T."/>
            <person name="Harrow J."/>
            <person name="Olson M.V."/>
            <person name="Beck S."/>
            <person name="Rogers J."/>
            <person name="Bentley D.R."/>
        </authorList>
    </citation>
    <scope>NUCLEOTIDE SEQUENCE [LARGE SCALE GENOMIC DNA]</scope>
</reference>
<reference key="3">
    <citation type="submission" date="2005-07" db="EMBL/GenBank/DDBJ databases">
        <authorList>
            <person name="Mural R.J."/>
            <person name="Istrail S."/>
            <person name="Sutton G.G."/>
            <person name="Florea L."/>
            <person name="Halpern A.L."/>
            <person name="Mobarry C.M."/>
            <person name="Lippert R."/>
            <person name="Walenz B."/>
            <person name="Shatkay H."/>
            <person name="Dew I."/>
            <person name="Miller J.R."/>
            <person name="Flanigan M.J."/>
            <person name="Edwards N.J."/>
            <person name="Bolanos R."/>
            <person name="Fasulo D."/>
            <person name="Halldorsson B.V."/>
            <person name="Hannenhalli S."/>
            <person name="Turner R."/>
            <person name="Yooseph S."/>
            <person name="Lu F."/>
            <person name="Nusskern D.R."/>
            <person name="Shue B.C."/>
            <person name="Zheng X.H."/>
            <person name="Zhong F."/>
            <person name="Delcher A.L."/>
            <person name="Huson D.H."/>
            <person name="Kravitz S.A."/>
            <person name="Mouchard L."/>
            <person name="Reinert K."/>
            <person name="Remington K.A."/>
            <person name="Clark A.G."/>
            <person name="Waterman M.S."/>
            <person name="Eichler E.E."/>
            <person name="Adams M.D."/>
            <person name="Hunkapiller M.W."/>
            <person name="Myers E.W."/>
            <person name="Venter J.C."/>
        </authorList>
    </citation>
    <scope>NUCLEOTIDE SEQUENCE [LARGE SCALE GENOMIC DNA]</scope>
</reference>
<reference key="4">
    <citation type="journal article" date="2004" name="Genome Res.">
        <title>The status, quality, and expansion of the NIH full-length cDNA project: the Mammalian Gene Collection (MGC).</title>
        <authorList>
            <consortium name="The MGC Project Team"/>
        </authorList>
    </citation>
    <scope>NUCLEOTIDE SEQUENCE [LARGE SCALE MRNA] (ISOFORM 2)</scope>
    <source>
        <tissue>Eye</tissue>
    </source>
</reference>
<reference key="5">
    <citation type="journal article" date="2001" name="Yeast">
        <title>Characterization of 16 novel human genes showing high similarity to yeast sequences.</title>
        <authorList>
            <person name="Stanchi F."/>
            <person name="Bertocco E."/>
            <person name="Toppo S."/>
            <person name="Dioguardi R."/>
            <person name="Simionati B."/>
            <person name="Cannata N."/>
            <person name="Zimbello R."/>
            <person name="Lanfranchi G."/>
            <person name="Valle G."/>
        </authorList>
    </citation>
    <scope>NUCLEOTIDE SEQUENCE [MRNA] OF 330-589 (ISOFORM 1)</scope>
    <source>
        <tissue>Brain</tissue>
    </source>
</reference>
<reference key="6">
    <citation type="journal article" date="1998" name="Cell">
        <title>The TAFs in the HAT.</title>
        <authorList>
            <person name="Struhl K."/>
            <person name="Moqtaderi Z."/>
        </authorList>
    </citation>
    <scope>REVIEW</scope>
    <scope>PCAF COMPLEX COMPOSITION</scope>
</reference>
<reference key="7">
    <citation type="journal article" date="2001" name="Mol. Cell. Biol.">
        <title>Human STAGA complex is a chromatin-acetylating transcription coactivator that interacts with pre-mRNA splicing and DNA damage-binding factors in vivo.</title>
        <authorList>
            <person name="Martinez E."/>
            <person name="Palhan V.B."/>
            <person name="Tjernberg A."/>
            <person name="Lymar E.S."/>
            <person name="Gamper A.M."/>
            <person name="Kundu T.K."/>
            <person name="Chait B.T."/>
            <person name="Roeder R.G."/>
        </authorList>
    </citation>
    <scope>IDENTIFICATION IN THE STAGA COMPLEX</scope>
    <scope>SUBCELLULAR LOCATION</scope>
    <scope>IDENTIFICATION BY MASS SPECTROMETRY</scope>
</reference>
<reference key="8">
    <citation type="journal article" date="2003" name="Proteomics">
        <title>Novel subunits of the TATA binding protein free TAFII-containing transcription complex identified by matrix-assisted laser desorption/ionization-time of flight mass spectrometry following one-dimensional gel electrophoresis.</title>
        <authorList>
            <person name="Cavusoglu N."/>
            <person name="Brand M."/>
            <person name="Tora L."/>
            <person name="van Dorsselaer A."/>
        </authorList>
    </citation>
    <scope>IDENTIFICATION IN THE TFTC-HAT COMPLEX</scope>
    <scope>IDENTIFICATION BY MASS SPECTROMETRY</scope>
</reference>
<proteinExistence type="evidence at protein level"/>
<feature type="chain" id="PRO_0000051261" description="TAF5-like RNA polymerase II p300/CBP-associated factor-associated factor 65 kDa subunit 5L">
    <location>
        <begin position="1"/>
        <end position="589"/>
    </location>
</feature>
<feature type="repeat" description="WD 1">
    <location>
        <begin position="266"/>
        <end position="305"/>
    </location>
</feature>
<feature type="repeat" description="WD 2">
    <location>
        <begin position="340"/>
        <end position="379"/>
    </location>
</feature>
<feature type="repeat" description="WD 3">
    <location>
        <begin position="382"/>
        <end position="421"/>
    </location>
</feature>
<feature type="repeat" description="WD 4">
    <location>
        <begin position="424"/>
        <end position="463"/>
    </location>
</feature>
<feature type="repeat" description="WD 5">
    <location>
        <begin position="466"/>
        <end position="505"/>
    </location>
</feature>
<feature type="repeat" description="WD 6">
    <location>
        <begin position="508"/>
        <end position="547"/>
    </location>
</feature>
<feature type="region of interest" description="Disordered" evidence="2">
    <location>
        <begin position="211"/>
        <end position="230"/>
    </location>
</feature>
<feature type="compositionally biased region" description="Polar residues" evidence="2">
    <location>
        <begin position="211"/>
        <end position="221"/>
    </location>
</feature>
<feature type="splice variant" id="VSP_010156" description="In isoform 2." evidence="6">
    <original>D</original>
    <variation>V</variation>
    <location>
        <position position="325"/>
    </location>
</feature>
<feature type="splice variant" id="VSP_010157" description="In isoform 2." evidence="6">
    <location>
        <begin position="326"/>
        <end position="589"/>
    </location>
</feature>
<feature type="helix" evidence="10">
    <location>
        <begin position="6"/>
        <end position="19"/>
    </location>
</feature>
<feature type="helix" evidence="10">
    <location>
        <begin position="39"/>
        <end position="50"/>
    </location>
</feature>
<feature type="strand" evidence="10">
    <location>
        <begin position="51"/>
        <end position="53"/>
    </location>
</feature>
<feature type="turn" evidence="10">
    <location>
        <begin position="58"/>
        <end position="60"/>
    </location>
</feature>
<feature type="helix" evidence="10">
    <location>
        <begin position="69"/>
        <end position="83"/>
    </location>
</feature>
<feature type="helix" evidence="10">
    <location>
        <begin position="87"/>
        <end position="91"/>
    </location>
</feature>
<feature type="helix" evidence="10">
    <location>
        <begin position="96"/>
        <end position="109"/>
    </location>
</feature>
<feature type="helix" evidence="10">
    <location>
        <begin position="113"/>
        <end position="123"/>
    </location>
</feature>
<feature type="strand" evidence="10">
    <location>
        <begin position="129"/>
        <end position="131"/>
    </location>
</feature>
<feature type="helix" evidence="10">
    <location>
        <begin position="134"/>
        <end position="141"/>
    </location>
</feature>
<feature type="helix" evidence="10">
    <location>
        <begin position="146"/>
        <end position="151"/>
    </location>
</feature>
<feature type="helix" evidence="10">
    <location>
        <begin position="154"/>
        <end position="160"/>
    </location>
</feature>
<feature type="strand" evidence="10">
    <location>
        <begin position="163"/>
        <end position="168"/>
    </location>
</feature>
<feature type="helix" evidence="10">
    <location>
        <begin position="169"/>
        <end position="181"/>
    </location>
</feature>
<feature type="helix" evidence="10">
    <location>
        <begin position="185"/>
        <end position="193"/>
    </location>
</feature>
<feature type="strand" evidence="10">
    <location>
        <begin position="195"/>
        <end position="200"/>
    </location>
</feature>
<feature type="strand" evidence="10">
    <location>
        <begin position="258"/>
        <end position="264"/>
    </location>
</feature>
<feature type="strand" evidence="10">
    <location>
        <begin position="271"/>
        <end position="276"/>
    </location>
</feature>
<feature type="strand" evidence="10">
    <location>
        <begin position="282"/>
        <end position="290"/>
    </location>
</feature>
<feature type="strand" evidence="10">
    <location>
        <begin position="292"/>
        <end position="300"/>
    </location>
</feature>
<feature type="turn" evidence="10">
    <location>
        <begin position="326"/>
        <end position="330"/>
    </location>
</feature>
<feature type="strand" evidence="10">
    <location>
        <begin position="333"/>
        <end position="338"/>
    </location>
</feature>
<feature type="strand" evidence="10">
    <location>
        <begin position="345"/>
        <end position="350"/>
    </location>
</feature>
<feature type="strand" evidence="10">
    <location>
        <begin position="354"/>
        <end position="361"/>
    </location>
</feature>
<feature type="strand" evidence="10">
    <location>
        <begin position="366"/>
        <end position="370"/>
    </location>
</feature>
<feature type="turn" evidence="10">
    <location>
        <begin position="371"/>
        <end position="374"/>
    </location>
</feature>
<feature type="strand" evidence="10">
    <location>
        <begin position="375"/>
        <end position="380"/>
    </location>
</feature>
<feature type="strand" evidence="10">
    <location>
        <begin position="396"/>
        <end position="403"/>
    </location>
</feature>
<feature type="strand" evidence="10">
    <location>
        <begin position="408"/>
        <end position="412"/>
    </location>
</feature>
<feature type="strand" evidence="10">
    <location>
        <begin position="415"/>
        <end position="422"/>
    </location>
</feature>
<feature type="strand" evidence="10">
    <location>
        <begin position="429"/>
        <end position="434"/>
    </location>
</feature>
<feature type="strand" evidence="10">
    <location>
        <begin position="438"/>
        <end position="445"/>
    </location>
</feature>
<feature type="strand" evidence="10">
    <location>
        <begin position="450"/>
        <end position="454"/>
    </location>
</feature>
<feature type="turn" evidence="10">
    <location>
        <begin position="455"/>
        <end position="457"/>
    </location>
</feature>
<feature type="strand" evidence="10">
    <location>
        <begin position="460"/>
        <end position="464"/>
    </location>
</feature>
<feature type="strand" evidence="10">
    <location>
        <begin position="471"/>
        <end position="476"/>
    </location>
</feature>
<feature type="strand" evidence="10">
    <location>
        <begin position="480"/>
        <end position="487"/>
    </location>
</feature>
<feature type="strand" evidence="10">
    <location>
        <begin position="492"/>
        <end position="496"/>
    </location>
</feature>
<feature type="turn" evidence="10">
    <location>
        <begin position="497"/>
        <end position="500"/>
    </location>
</feature>
<feature type="strand" evidence="10">
    <location>
        <begin position="501"/>
        <end position="506"/>
    </location>
</feature>
<feature type="strand" evidence="10">
    <location>
        <begin position="513"/>
        <end position="518"/>
    </location>
</feature>
<feature type="strand" evidence="10">
    <location>
        <begin position="524"/>
        <end position="529"/>
    </location>
</feature>
<feature type="turn" evidence="10">
    <location>
        <begin position="530"/>
        <end position="532"/>
    </location>
</feature>
<feature type="strand" evidence="10">
    <location>
        <begin position="533"/>
        <end position="538"/>
    </location>
</feature>
<feature type="strand" evidence="10">
    <location>
        <begin position="548"/>
        <end position="550"/>
    </location>
</feature>
<feature type="strand" evidence="10">
    <location>
        <begin position="553"/>
        <end position="559"/>
    </location>
</feature>
<feature type="strand" evidence="10">
    <location>
        <begin position="565"/>
        <end position="569"/>
    </location>
</feature>
<feature type="strand" evidence="10">
    <location>
        <begin position="573"/>
        <end position="582"/>
    </location>
</feature>